<protein>
    <recommendedName>
        <fullName evidence="6">Cell wall galactomannoprotein</fullName>
    </recommendedName>
</protein>
<name>MP1_ARMOS</name>
<organism>
    <name type="scientific">Armillaria ostoyae</name>
    <name type="common">Armillaria root rot fungus</name>
    <dbReference type="NCBI Taxonomy" id="47428"/>
    <lineage>
        <taxon>Eukaryota</taxon>
        <taxon>Fungi</taxon>
        <taxon>Dikarya</taxon>
        <taxon>Basidiomycota</taxon>
        <taxon>Agaricomycotina</taxon>
        <taxon>Agaricomycetes</taxon>
        <taxon>Agaricomycetidae</taxon>
        <taxon>Agaricales</taxon>
        <taxon>Marasmiineae</taxon>
        <taxon>Physalacriaceae</taxon>
        <taxon>Armillaria</taxon>
    </lineage>
</organism>
<dbReference type="EMBL" id="FUEG01000032">
    <property type="protein sequence ID" value="SJL15991.1"/>
    <property type="molecule type" value="Genomic_DNA"/>
</dbReference>
<dbReference type="SMR" id="A0A284S4Q2"/>
<dbReference type="OMA" id="CSASEYQ"/>
<dbReference type="OrthoDB" id="3037892at2759"/>
<dbReference type="Proteomes" id="UP000219338">
    <property type="component" value="Unassembled WGS sequence"/>
</dbReference>
<dbReference type="GO" id="GO:0005576">
    <property type="term" value="C:extracellular region"/>
    <property type="evidence" value="ECO:0007669"/>
    <property type="project" value="UniProtKB-KW"/>
</dbReference>
<sequence>MFFRILALLPLVFLVTAHSLVSRSDVVVPVCNAISNMNTTAIALQNACTNFEAQPTNDMAMPIMKFGFALEGEISSGINVCPSDVLSSGDTEILFNALKDLYDTIQKLVSSILKLKDAIIAAGYEAQSCFAVEMMATSMTTFMDKVYACSANEYKGPLDEMRSGVLTMMAQANFSYCGTVSPRGSSKISGVEI</sequence>
<feature type="signal peptide" evidence="3">
    <location>
        <begin position="1"/>
        <end position="17"/>
    </location>
</feature>
<feature type="chain" id="PRO_5013148619" description="Cell wall galactomannoprotein">
    <location>
        <begin position="18"/>
        <end position="193"/>
    </location>
</feature>
<feature type="glycosylation site" description="N-linked (GlcNAc...) asparagine" evidence="4">
    <location>
        <position position="38"/>
    </location>
</feature>
<feature type="glycosylation site" description="N-linked (GlcNAc...) asparagine" evidence="4">
    <location>
        <position position="173"/>
    </location>
</feature>
<keyword id="KW-0134">Cell wall</keyword>
<keyword id="KW-0325">Glycoprotein</keyword>
<keyword id="KW-1185">Reference proteome</keyword>
<keyword id="KW-0964">Secreted</keyword>
<keyword id="KW-0732">Signal</keyword>
<reference key="1">
    <citation type="journal article" date="2017" name="Nat. Ecol. Evol.">
        <title>Genome expansion and lineage-specific genetic innovations in the forest pathogenic fungi Armillaria.</title>
        <authorList>
            <person name="Sipos G."/>
            <person name="Prasanna A.N."/>
            <person name="Walter M.C."/>
            <person name="O'Connor E."/>
            <person name="Balint B."/>
            <person name="Krizsan K."/>
            <person name="Kiss B."/>
            <person name="Hess J."/>
            <person name="Varga T."/>
            <person name="Slot J."/>
            <person name="Riley R."/>
            <person name="Boka B."/>
            <person name="Rigling D."/>
            <person name="Barry K."/>
            <person name="Lee J."/>
            <person name="Mihaltcheva S."/>
            <person name="LaButti K."/>
            <person name="Lipzen A."/>
            <person name="Waldron R."/>
            <person name="Moloney N.M."/>
            <person name="Sperisen C."/>
            <person name="Kredics L."/>
            <person name="Vagvoelgyi C."/>
            <person name="Patrignani A."/>
            <person name="Fitzpatrick D."/>
            <person name="Nagy I."/>
            <person name="Doyle S."/>
            <person name="Anderson J.B."/>
            <person name="Grigoriev I.V."/>
            <person name="Gueldener U."/>
            <person name="Muensterkoetter M."/>
            <person name="Nagy L.G."/>
        </authorList>
    </citation>
    <scope>NUCLEOTIDE SEQUENCE [LARGE SCALE GENOMIC DNA]</scope>
    <scope>IDENTIFICATION</scope>
    <scope>INDUCTION</scope>
    <source>
        <strain>C18/9</strain>
    </source>
</reference>
<reference key="2">
    <citation type="journal article" date="2018" name="Curr. Biol.">
        <title>Armillaria.</title>
        <authorList>
            <person name="Sipos G."/>
            <person name="Anderson J.B."/>
            <person name="Nagy L.G."/>
        </authorList>
    </citation>
    <scope>MISCELLANEOUS</scope>
</reference>
<proteinExistence type="evidence at transcript level"/>
<gene>
    <name type="ORF">ARMOST_19505</name>
</gene>
<comment type="function">
    <text evidence="1">Constitutive protein of the cell wall.</text>
</comment>
<comment type="subcellular location">
    <subcellularLocation>
        <location evidence="1">Secreted</location>
        <location evidence="1">Cell wall</location>
    </subcellularLocation>
    <text evidence="1">Associated with the entire thickness of the hyphal cell walls, hyphal septa, and walls of conidiospores.</text>
</comment>
<comment type="induction">
    <text evidence="5">Shows high expression in fruiting bodies and is highly expressed throughout development.</text>
</comment>
<comment type="PTM">
    <text evidence="2">Galactomannoprotein, glycosylated.</text>
</comment>
<comment type="miscellaneous">
    <text evidence="7 8">Armillaria species are both devastating forest pathogens and some of the largest and oldest terrestrial organisms on Earth (Probable). They forage for hosts and achieve immense colony sizes via rhizomorphs, root-like multicellular structures of clonal dispersal (Probable). An A.ostoyae colony, known as the 'humongous fungus' in the Malheur National Forest in the Strawberry Mountains of eastern Oregon, was found to be the largest fungal colony in the world, spanning an area of 9.1 square kilometers (Probable). This organism is estimated to be some 8,000 years old and may weigh as much as 35,000 tons (Probable).</text>
</comment>
<comment type="similarity">
    <text evidence="7">Belongs to the cell wall mannoprotein 1 family.</text>
</comment>
<evidence type="ECO:0000250" key="1">
    <source>
        <dbReference type="UniProtKB" id="Q8TG42"/>
    </source>
</evidence>
<evidence type="ECO:0000250" key="2">
    <source>
        <dbReference type="UniProtKB" id="Q9HFP8"/>
    </source>
</evidence>
<evidence type="ECO:0000255" key="3"/>
<evidence type="ECO:0000255" key="4">
    <source>
        <dbReference type="PROSITE-ProRule" id="PRU00498"/>
    </source>
</evidence>
<evidence type="ECO:0000269" key="5">
    <source>
    </source>
</evidence>
<evidence type="ECO:0000303" key="6">
    <source>
    </source>
</evidence>
<evidence type="ECO:0000305" key="7"/>
<evidence type="ECO:0000305" key="8">
    <source>
    </source>
</evidence>
<accession>A0A284S4Q2</accession>